<keyword id="KW-0963">Cytoplasm</keyword>
<keyword id="KW-0210">Decarboxylase</keyword>
<keyword id="KW-0456">Lyase</keyword>
<keyword id="KW-0627">Porphyrin biosynthesis</keyword>
<evidence type="ECO:0000255" key="1">
    <source>
        <dbReference type="HAMAP-Rule" id="MF_00218"/>
    </source>
</evidence>
<sequence>MLKNDRLLRALRRQPVDRTPVWLMRQAGRYLPEYRATRARAGSFLGMAKNPDIACEVTLQPLERFPLDAAILFSDILTIPDAMGLELYFVEGEGPKFRHPVRDADAIHRLGVPDMETELRYVMDAVRLIRRELDGAVPLIGFSGSPWTLACYMIEGGGSKEYARIKAMAFNAPQLLHHLLSTVTDAVIAYLSAQRAAGAQALQVFDTWGGVLSPAMYREFSLPYLTRIAQELERGSGEERTPLVLFGKGNGAYVSELAASGAEAVGVDWTISLADAAERAGGRVALQGNLDPATLYGSPDAIRSEVGKTLDSYAYGNGGSREGHVFNLGHGMSPDMNPDHVGVLVEAVQTLSKR</sequence>
<feature type="chain" id="PRO_1000023999" description="Uroporphyrinogen decarboxylase">
    <location>
        <begin position="1"/>
        <end position="354"/>
    </location>
</feature>
<feature type="binding site" evidence="1">
    <location>
        <begin position="25"/>
        <end position="29"/>
    </location>
    <ligand>
        <name>substrate</name>
    </ligand>
</feature>
<feature type="binding site" evidence="1">
    <location>
        <position position="75"/>
    </location>
    <ligand>
        <name>substrate</name>
    </ligand>
</feature>
<feature type="binding site" evidence="1">
    <location>
        <position position="152"/>
    </location>
    <ligand>
        <name>substrate</name>
    </ligand>
</feature>
<feature type="binding site" evidence="1">
    <location>
        <position position="207"/>
    </location>
    <ligand>
        <name>substrate</name>
    </ligand>
</feature>
<feature type="binding site" evidence="1">
    <location>
        <position position="330"/>
    </location>
    <ligand>
        <name>substrate</name>
    </ligand>
</feature>
<feature type="site" description="Transition state stabilizer" evidence="1">
    <location>
        <position position="75"/>
    </location>
</feature>
<dbReference type="EC" id="4.1.1.37" evidence="1"/>
<dbReference type="EMBL" id="CP000050">
    <property type="protein sequence ID" value="AAY48334.1"/>
    <property type="molecule type" value="Genomic_DNA"/>
</dbReference>
<dbReference type="RefSeq" id="WP_011037969.1">
    <property type="nucleotide sequence ID" value="NZ_CP155948.1"/>
</dbReference>
<dbReference type="SMR" id="Q4UX89"/>
<dbReference type="KEGG" id="xcb:XC_1265"/>
<dbReference type="HOGENOM" id="CLU_040933_0_0_6"/>
<dbReference type="UniPathway" id="UPA00251">
    <property type="reaction ID" value="UER00321"/>
</dbReference>
<dbReference type="Proteomes" id="UP000000420">
    <property type="component" value="Chromosome"/>
</dbReference>
<dbReference type="GO" id="GO:0005829">
    <property type="term" value="C:cytosol"/>
    <property type="evidence" value="ECO:0007669"/>
    <property type="project" value="TreeGrafter"/>
</dbReference>
<dbReference type="GO" id="GO:0004853">
    <property type="term" value="F:uroporphyrinogen decarboxylase activity"/>
    <property type="evidence" value="ECO:0007669"/>
    <property type="project" value="UniProtKB-UniRule"/>
</dbReference>
<dbReference type="GO" id="GO:0019353">
    <property type="term" value="P:protoporphyrinogen IX biosynthetic process from glutamate"/>
    <property type="evidence" value="ECO:0007669"/>
    <property type="project" value="TreeGrafter"/>
</dbReference>
<dbReference type="CDD" id="cd00717">
    <property type="entry name" value="URO-D"/>
    <property type="match status" value="1"/>
</dbReference>
<dbReference type="FunFam" id="3.20.20.210:FF:000001">
    <property type="entry name" value="Uroporphyrinogen decarboxylase"/>
    <property type="match status" value="1"/>
</dbReference>
<dbReference type="Gene3D" id="3.20.20.210">
    <property type="match status" value="1"/>
</dbReference>
<dbReference type="HAMAP" id="MF_00218">
    <property type="entry name" value="URO_D"/>
    <property type="match status" value="1"/>
</dbReference>
<dbReference type="InterPro" id="IPR038071">
    <property type="entry name" value="UROD/MetE-like_sf"/>
</dbReference>
<dbReference type="InterPro" id="IPR006361">
    <property type="entry name" value="Uroporphyrinogen_deCO2ase_HemE"/>
</dbReference>
<dbReference type="InterPro" id="IPR000257">
    <property type="entry name" value="Uroporphyrinogen_deCOase"/>
</dbReference>
<dbReference type="NCBIfam" id="TIGR01464">
    <property type="entry name" value="hemE"/>
    <property type="match status" value="1"/>
</dbReference>
<dbReference type="PANTHER" id="PTHR21091">
    <property type="entry name" value="METHYLTETRAHYDROFOLATE:HOMOCYSTEINE METHYLTRANSFERASE RELATED"/>
    <property type="match status" value="1"/>
</dbReference>
<dbReference type="PANTHER" id="PTHR21091:SF169">
    <property type="entry name" value="UROPORPHYRINOGEN DECARBOXYLASE"/>
    <property type="match status" value="1"/>
</dbReference>
<dbReference type="Pfam" id="PF01208">
    <property type="entry name" value="URO-D"/>
    <property type="match status" value="1"/>
</dbReference>
<dbReference type="SUPFAM" id="SSF51726">
    <property type="entry name" value="UROD/MetE-like"/>
    <property type="match status" value="1"/>
</dbReference>
<dbReference type="PROSITE" id="PS00906">
    <property type="entry name" value="UROD_1"/>
    <property type="match status" value="1"/>
</dbReference>
<dbReference type="PROSITE" id="PS00907">
    <property type="entry name" value="UROD_2"/>
    <property type="match status" value="1"/>
</dbReference>
<name>DCUP_XANC8</name>
<proteinExistence type="inferred from homology"/>
<comment type="function">
    <text evidence="1">Catalyzes the decarboxylation of four acetate groups of uroporphyrinogen-III to yield coproporphyrinogen-III.</text>
</comment>
<comment type="catalytic activity">
    <reaction evidence="1">
        <text>uroporphyrinogen III + 4 H(+) = coproporphyrinogen III + 4 CO2</text>
        <dbReference type="Rhea" id="RHEA:19865"/>
        <dbReference type="ChEBI" id="CHEBI:15378"/>
        <dbReference type="ChEBI" id="CHEBI:16526"/>
        <dbReference type="ChEBI" id="CHEBI:57308"/>
        <dbReference type="ChEBI" id="CHEBI:57309"/>
        <dbReference type="EC" id="4.1.1.37"/>
    </reaction>
</comment>
<comment type="pathway">
    <text evidence="1">Porphyrin-containing compound metabolism; protoporphyrin-IX biosynthesis; coproporphyrinogen-III from 5-aminolevulinate: step 4/4.</text>
</comment>
<comment type="subunit">
    <text evidence="1">Homodimer.</text>
</comment>
<comment type="subcellular location">
    <subcellularLocation>
        <location evidence="1">Cytoplasm</location>
    </subcellularLocation>
</comment>
<comment type="similarity">
    <text evidence="1">Belongs to the uroporphyrinogen decarboxylase family.</text>
</comment>
<organism>
    <name type="scientific">Xanthomonas campestris pv. campestris (strain 8004)</name>
    <dbReference type="NCBI Taxonomy" id="314565"/>
    <lineage>
        <taxon>Bacteria</taxon>
        <taxon>Pseudomonadati</taxon>
        <taxon>Pseudomonadota</taxon>
        <taxon>Gammaproteobacteria</taxon>
        <taxon>Lysobacterales</taxon>
        <taxon>Lysobacteraceae</taxon>
        <taxon>Xanthomonas</taxon>
    </lineage>
</organism>
<reference key="1">
    <citation type="journal article" date="2005" name="Genome Res.">
        <title>Comparative and functional genomic analyses of the pathogenicity of phytopathogen Xanthomonas campestris pv. campestris.</title>
        <authorList>
            <person name="Qian W."/>
            <person name="Jia Y."/>
            <person name="Ren S.-X."/>
            <person name="He Y.-Q."/>
            <person name="Feng J.-X."/>
            <person name="Lu L.-F."/>
            <person name="Sun Q."/>
            <person name="Ying G."/>
            <person name="Tang D.-J."/>
            <person name="Tang H."/>
            <person name="Wu W."/>
            <person name="Hao P."/>
            <person name="Wang L."/>
            <person name="Jiang B.-L."/>
            <person name="Zeng S."/>
            <person name="Gu W.-Y."/>
            <person name="Lu G."/>
            <person name="Rong L."/>
            <person name="Tian Y."/>
            <person name="Yao Z."/>
            <person name="Fu G."/>
            <person name="Chen B."/>
            <person name="Fang R."/>
            <person name="Qiang B."/>
            <person name="Chen Z."/>
            <person name="Zhao G.-P."/>
            <person name="Tang J.-L."/>
            <person name="He C."/>
        </authorList>
    </citation>
    <scope>NUCLEOTIDE SEQUENCE [LARGE SCALE GENOMIC DNA]</scope>
    <source>
        <strain>8004</strain>
    </source>
</reference>
<accession>Q4UX89</accession>
<protein>
    <recommendedName>
        <fullName evidence="1">Uroporphyrinogen decarboxylase</fullName>
        <shortName evidence="1">UPD</shortName>
        <shortName evidence="1">URO-D</shortName>
        <ecNumber evidence="1">4.1.1.37</ecNumber>
    </recommendedName>
</protein>
<gene>
    <name evidence="1" type="primary">hemE</name>
    <name type="ordered locus">XC_1265</name>
</gene>